<feature type="chain" id="PRO_0000276621" description="Small ribosomal subunit protein uS12c">
    <location>
        <begin position="1"/>
        <end position="125"/>
    </location>
</feature>
<keyword id="KW-0150">Chloroplast</keyword>
<keyword id="KW-0934">Plastid</keyword>
<keyword id="KW-0687">Ribonucleoprotein</keyword>
<keyword id="KW-0689">Ribosomal protein</keyword>
<keyword id="KW-0694">RNA-binding</keyword>
<keyword id="KW-0699">rRNA-binding</keyword>
<gene>
    <name type="primary">rps12</name>
</gene>
<protein>
    <recommendedName>
        <fullName evidence="2">Small ribosomal subunit protein uS12c</fullName>
    </recommendedName>
    <alternativeName>
        <fullName>30S ribosomal protein S12, chloroplastic</fullName>
    </alternativeName>
</protein>
<geneLocation type="chloroplast"/>
<proteinExistence type="inferred from homology"/>
<comment type="function">
    <text evidence="1">With S4 and S5 plays an important role in translational accuracy. Located at the interface of the 30S and 50S subunits (By similarity).</text>
</comment>
<comment type="subunit">
    <text evidence="1">Part of the 30S ribosomal subunit.</text>
</comment>
<comment type="subcellular location">
    <subcellularLocation>
        <location>Plastid</location>
        <location>Chloroplast</location>
    </subcellularLocation>
</comment>
<comment type="similarity">
    <text evidence="2">Belongs to the universal ribosomal protein uS12 family.</text>
</comment>
<dbReference type="EMBL" id="DQ291132">
    <property type="protein sequence ID" value="ABB81953.1"/>
    <property type="molecule type" value="Genomic_DNA"/>
</dbReference>
<dbReference type="RefSeq" id="YP_635885.1">
    <property type="nucleotide sequence ID" value="NC_008099.1"/>
</dbReference>
<dbReference type="SMR" id="Q20EW0"/>
<dbReference type="GeneID" id="4100079"/>
<dbReference type="GO" id="GO:0009507">
    <property type="term" value="C:chloroplast"/>
    <property type="evidence" value="ECO:0007669"/>
    <property type="project" value="UniProtKB-SubCell"/>
</dbReference>
<dbReference type="GO" id="GO:0015935">
    <property type="term" value="C:small ribosomal subunit"/>
    <property type="evidence" value="ECO:0007669"/>
    <property type="project" value="InterPro"/>
</dbReference>
<dbReference type="GO" id="GO:0019843">
    <property type="term" value="F:rRNA binding"/>
    <property type="evidence" value="ECO:0007669"/>
    <property type="project" value="UniProtKB-UniRule"/>
</dbReference>
<dbReference type="GO" id="GO:0003735">
    <property type="term" value="F:structural constituent of ribosome"/>
    <property type="evidence" value="ECO:0007669"/>
    <property type="project" value="InterPro"/>
</dbReference>
<dbReference type="GO" id="GO:0006412">
    <property type="term" value="P:translation"/>
    <property type="evidence" value="ECO:0007669"/>
    <property type="project" value="UniProtKB-UniRule"/>
</dbReference>
<dbReference type="CDD" id="cd03368">
    <property type="entry name" value="Ribosomal_S12"/>
    <property type="match status" value="1"/>
</dbReference>
<dbReference type="FunFam" id="2.40.50.140:FF:000001">
    <property type="entry name" value="30S ribosomal protein S12"/>
    <property type="match status" value="1"/>
</dbReference>
<dbReference type="Gene3D" id="2.40.50.140">
    <property type="entry name" value="Nucleic acid-binding proteins"/>
    <property type="match status" value="1"/>
</dbReference>
<dbReference type="HAMAP" id="MF_00403_B">
    <property type="entry name" value="Ribosomal_uS12_B"/>
    <property type="match status" value="1"/>
</dbReference>
<dbReference type="InterPro" id="IPR012340">
    <property type="entry name" value="NA-bd_OB-fold"/>
</dbReference>
<dbReference type="InterPro" id="IPR006032">
    <property type="entry name" value="Ribosomal_uS12"/>
</dbReference>
<dbReference type="InterPro" id="IPR005679">
    <property type="entry name" value="Ribosomal_uS12_bac"/>
</dbReference>
<dbReference type="NCBIfam" id="TIGR00981">
    <property type="entry name" value="rpsL_bact"/>
    <property type="match status" value="1"/>
</dbReference>
<dbReference type="PANTHER" id="PTHR11652">
    <property type="entry name" value="30S RIBOSOMAL PROTEIN S12 FAMILY MEMBER"/>
    <property type="match status" value="1"/>
</dbReference>
<dbReference type="Pfam" id="PF00164">
    <property type="entry name" value="Ribosom_S12_S23"/>
    <property type="match status" value="1"/>
</dbReference>
<dbReference type="PIRSF" id="PIRSF002133">
    <property type="entry name" value="Ribosomal_S12/S23"/>
    <property type="match status" value="1"/>
</dbReference>
<dbReference type="PRINTS" id="PR01034">
    <property type="entry name" value="RIBOSOMALS12"/>
</dbReference>
<dbReference type="SUPFAM" id="SSF50249">
    <property type="entry name" value="Nucleic acid-binding proteins"/>
    <property type="match status" value="1"/>
</dbReference>
<dbReference type="PROSITE" id="PS00055">
    <property type="entry name" value="RIBOSOMAL_S12"/>
    <property type="match status" value="1"/>
</dbReference>
<reference key="1">
    <citation type="journal article" date="2006" name="BMC Biol.">
        <title>The complete chloroplast DNA sequence of the green alga Oltmannsiellopsis viridis reveals a distinctive quadripartite architecture in the chloroplast genome of early diverging ulvophytes.</title>
        <authorList>
            <person name="Pombert J.-F."/>
            <person name="Lemieux C."/>
            <person name="Turmel M."/>
        </authorList>
    </citation>
    <scope>NUCLEOTIDE SEQUENCE [LARGE SCALE GENOMIC DNA]</scope>
</reference>
<accession>Q20EW0</accession>
<organism>
    <name type="scientific">Oltmannsiellopsis viridis</name>
    <name type="common">Marine flagellate</name>
    <name type="synonym">Oltmannsiella viridis</name>
    <dbReference type="NCBI Taxonomy" id="51324"/>
    <lineage>
        <taxon>Eukaryota</taxon>
        <taxon>Viridiplantae</taxon>
        <taxon>Chlorophyta</taxon>
        <taxon>Ulvophyceae</taxon>
        <taxon>Oltmannsiellopsidales</taxon>
        <taxon>Oltmannsiellopsidaceae</taxon>
        <taxon>Oltmannsiellopsis</taxon>
    </lineage>
</organism>
<name>RR12_OLTVI</name>
<sequence>MPTVQQLVRSARQKITTKTKSPALKSCPQRRGVCTRVYTTTPKKPNSALRKVARVRLTSGFEVTAYIPGIGHNLQEHSVVLVRGGKVKDLPGVRYHVVRGTLDTAGVKGRVNGRSKYGVKRPSDS</sequence>
<evidence type="ECO:0000250" key="1"/>
<evidence type="ECO:0000305" key="2"/>